<dbReference type="EC" id="4.2.1.9" evidence="1"/>
<dbReference type="EMBL" id="BA000018">
    <property type="protein sequence ID" value="BAB43140.1"/>
    <property type="molecule type" value="Genomic_DNA"/>
</dbReference>
<dbReference type="PIR" id="C89997">
    <property type="entry name" value="C89997"/>
</dbReference>
<dbReference type="RefSeq" id="WP_001255780.1">
    <property type="nucleotide sequence ID" value="NC_002745.2"/>
</dbReference>
<dbReference type="SMR" id="P65157"/>
<dbReference type="EnsemblBacteria" id="BAB43140">
    <property type="protein sequence ID" value="BAB43140"/>
    <property type="gene ID" value="BAB43140"/>
</dbReference>
<dbReference type="KEGG" id="sau:SA1858"/>
<dbReference type="HOGENOM" id="CLU_014271_4_2_9"/>
<dbReference type="UniPathway" id="UPA00047">
    <property type="reaction ID" value="UER00057"/>
</dbReference>
<dbReference type="UniPathway" id="UPA00049">
    <property type="reaction ID" value="UER00061"/>
</dbReference>
<dbReference type="GO" id="GO:0005829">
    <property type="term" value="C:cytosol"/>
    <property type="evidence" value="ECO:0007669"/>
    <property type="project" value="TreeGrafter"/>
</dbReference>
<dbReference type="GO" id="GO:0051537">
    <property type="term" value="F:2 iron, 2 sulfur cluster binding"/>
    <property type="evidence" value="ECO:0007669"/>
    <property type="project" value="UniProtKB-UniRule"/>
</dbReference>
<dbReference type="GO" id="GO:0004160">
    <property type="term" value="F:dihydroxy-acid dehydratase activity"/>
    <property type="evidence" value="ECO:0007669"/>
    <property type="project" value="UniProtKB-UniRule"/>
</dbReference>
<dbReference type="GO" id="GO:0000287">
    <property type="term" value="F:magnesium ion binding"/>
    <property type="evidence" value="ECO:0007669"/>
    <property type="project" value="UniProtKB-UniRule"/>
</dbReference>
<dbReference type="GO" id="GO:0009097">
    <property type="term" value="P:isoleucine biosynthetic process"/>
    <property type="evidence" value="ECO:0007669"/>
    <property type="project" value="UniProtKB-UniRule"/>
</dbReference>
<dbReference type="GO" id="GO:0009099">
    <property type="term" value="P:L-valine biosynthetic process"/>
    <property type="evidence" value="ECO:0007669"/>
    <property type="project" value="UniProtKB-UniRule"/>
</dbReference>
<dbReference type="FunFam" id="3.50.30.80:FF:000001">
    <property type="entry name" value="Dihydroxy-acid dehydratase"/>
    <property type="match status" value="1"/>
</dbReference>
<dbReference type="Gene3D" id="3.50.30.80">
    <property type="entry name" value="IlvD/EDD C-terminal domain-like"/>
    <property type="match status" value="1"/>
</dbReference>
<dbReference type="HAMAP" id="MF_00012">
    <property type="entry name" value="IlvD"/>
    <property type="match status" value="1"/>
</dbReference>
<dbReference type="InterPro" id="IPR042096">
    <property type="entry name" value="Dihydro-acid_dehy_C"/>
</dbReference>
<dbReference type="InterPro" id="IPR004404">
    <property type="entry name" value="DihydroxyA_deHydtase"/>
</dbReference>
<dbReference type="InterPro" id="IPR020558">
    <property type="entry name" value="DiOHA_6PGluconate_deHydtase_CS"/>
</dbReference>
<dbReference type="InterPro" id="IPR056740">
    <property type="entry name" value="ILV_EDD_C"/>
</dbReference>
<dbReference type="InterPro" id="IPR000581">
    <property type="entry name" value="ILV_EDD_N"/>
</dbReference>
<dbReference type="InterPro" id="IPR037237">
    <property type="entry name" value="IlvD/EDD_N"/>
</dbReference>
<dbReference type="NCBIfam" id="TIGR00110">
    <property type="entry name" value="ilvD"/>
    <property type="match status" value="1"/>
</dbReference>
<dbReference type="NCBIfam" id="NF002068">
    <property type="entry name" value="PRK00911.1"/>
    <property type="match status" value="1"/>
</dbReference>
<dbReference type="PANTHER" id="PTHR43661">
    <property type="entry name" value="D-XYLONATE DEHYDRATASE"/>
    <property type="match status" value="1"/>
</dbReference>
<dbReference type="PANTHER" id="PTHR43661:SF3">
    <property type="entry name" value="D-XYLONATE DEHYDRATASE YAGF-RELATED"/>
    <property type="match status" value="1"/>
</dbReference>
<dbReference type="Pfam" id="PF24877">
    <property type="entry name" value="ILV_EDD_C"/>
    <property type="match status" value="1"/>
</dbReference>
<dbReference type="Pfam" id="PF00920">
    <property type="entry name" value="ILVD_EDD_N"/>
    <property type="match status" value="1"/>
</dbReference>
<dbReference type="SUPFAM" id="SSF143975">
    <property type="entry name" value="IlvD/EDD N-terminal domain-like"/>
    <property type="match status" value="1"/>
</dbReference>
<dbReference type="SUPFAM" id="SSF52016">
    <property type="entry name" value="LeuD/IlvD-like"/>
    <property type="match status" value="1"/>
</dbReference>
<dbReference type="PROSITE" id="PS00886">
    <property type="entry name" value="ILVD_EDD_1"/>
    <property type="match status" value="1"/>
</dbReference>
<dbReference type="PROSITE" id="PS00887">
    <property type="entry name" value="ILVD_EDD_2"/>
    <property type="match status" value="1"/>
</dbReference>
<protein>
    <recommendedName>
        <fullName evidence="1">Dihydroxy-acid dehydratase</fullName>
        <shortName evidence="1">DAD</shortName>
        <ecNumber evidence="1">4.2.1.9</ecNumber>
    </recommendedName>
</protein>
<sequence>MRSDMIKKGDHQAPARSLLHATGALKSPTDMNKPFVAICNSYIDIVPGHVHLRELADIAKEAIREAGAIPFEFNTIGVDDGIAMGHIGMRYSLPSREIIADAAETVINAHWFDGVFYIPNCDKITPGMILAAMRTNVPAIFCSGGPMKAGLSAHGKALTLSSMFEAVGAFKEGSISKEEFLDMEQNACPTCGSCAGMFTANSMNCLMEVLGLALPYNGTALAVSDQRREMIRQAAFKLVENIKNDLKPRDIVTREAIDDAFALDMAMGGSTNTVLHTLAIANEAGIDYDLERINAIAKRTPYLSKIAPSSSYSMHDVHEAGGVPAIINELMKKDGTLHPDRITVTGKTLRENNEGKEIKNFDVIHPLDAPYDAQGGLSILFGNIAPKGAVIKVGGVDPSIKTFTGKAICFNSHDEAVEAIDNRTVRAGHVVVIRYEGPKGGPGMPEMLAPTSSIVGRGLGKDVALITDGRFSGATRGIAVGHISPEAASGGPIALIEDGDEITIDLTNRTLNVNQPEDVLARRRESLTPFKAKVKTGYLARYTALVTSANTGGVMQVPENLI</sequence>
<keyword id="KW-0001">2Fe-2S</keyword>
<keyword id="KW-0028">Amino-acid biosynthesis</keyword>
<keyword id="KW-0100">Branched-chain amino acid biosynthesis</keyword>
<keyword id="KW-0408">Iron</keyword>
<keyword id="KW-0411">Iron-sulfur</keyword>
<keyword id="KW-0456">Lyase</keyword>
<keyword id="KW-0460">Magnesium</keyword>
<keyword id="KW-0479">Metal-binding</keyword>
<accession>P65157</accession>
<accession>Q99SJ9</accession>
<feature type="chain" id="PRO_0000103507" description="Dihydroxy-acid dehydratase">
    <location>
        <begin position="1"/>
        <end position="562"/>
    </location>
</feature>
<feature type="active site" description="Proton acceptor" evidence="1">
    <location>
        <position position="472"/>
    </location>
</feature>
<feature type="binding site" evidence="1">
    <location>
        <position position="80"/>
    </location>
    <ligand>
        <name>Mg(2+)</name>
        <dbReference type="ChEBI" id="CHEBI:18420"/>
    </ligand>
</feature>
<feature type="binding site" evidence="1">
    <location>
        <position position="121"/>
    </location>
    <ligand>
        <name>[2Fe-2S] cluster</name>
        <dbReference type="ChEBI" id="CHEBI:190135"/>
    </ligand>
</feature>
<feature type="binding site" evidence="1">
    <location>
        <position position="122"/>
    </location>
    <ligand>
        <name>Mg(2+)</name>
        <dbReference type="ChEBI" id="CHEBI:18420"/>
    </ligand>
</feature>
<feature type="binding site" description="via carbamate group" evidence="1">
    <location>
        <position position="123"/>
    </location>
    <ligand>
        <name>Mg(2+)</name>
        <dbReference type="ChEBI" id="CHEBI:18420"/>
    </ligand>
</feature>
<feature type="binding site" evidence="1">
    <location>
        <position position="194"/>
    </location>
    <ligand>
        <name>[2Fe-2S] cluster</name>
        <dbReference type="ChEBI" id="CHEBI:190135"/>
    </ligand>
</feature>
<feature type="binding site" evidence="1">
    <location>
        <position position="446"/>
    </location>
    <ligand>
        <name>Mg(2+)</name>
        <dbReference type="ChEBI" id="CHEBI:18420"/>
    </ligand>
</feature>
<feature type="modified residue" description="N6-carboxylysine" evidence="1">
    <location>
        <position position="123"/>
    </location>
</feature>
<reference key="1">
    <citation type="journal article" date="2001" name="Lancet">
        <title>Whole genome sequencing of meticillin-resistant Staphylococcus aureus.</title>
        <authorList>
            <person name="Kuroda M."/>
            <person name="Ohta T."/>
            <person name="Uchiyama I."/>
            <person name="Baba T."/>
            <person name="Yuzawa H."/>
            <person name="Kobayashi I."/>
            <person name="Cui L."/>
            <person name="Oguchi A."/>
            <person name="Aoki K."/>
            <person name="Nagai Y."/>
            <person name="Lian J.-Q."/>
            <person name="Ito T."/>
            <person name="Kanamori M."/>
            <person name="Matsumaru H."/>
            <person name="Maruyama A."/>
            <person name="Murakami H."/>
            <person name="Hosoyama A."/>
            <person name="Mizutani-Ui Y."/>
            <person name="Takahashi N.K."/>
            <person name="Sawano T."/>
            <person name="Inoue R."/>
            <person name="Kaito C."/>
            <person name="Sekimizu K."/>
            <person name="Hirakawa H."/>
            <person name="Kuhara S."/>
            <person name="Goto S."/>
            <person name="Yabuzaki J."/>
            <person name="Kanehisa M."/>
            <person name="Yamashita A."/>
            <person name="Oshima K."/>
            <person name="Furuya K."/>
            <person name="Yoshino C."/>
            <person name="Shiba T."/>
            <person name="Hattori M."/>
            <person name="Ogasawara N."/>
            <person name="Hayashi H."/>
            <person name="Hiramatsu K."/>
        </authorList>
    </citation>
    <scope>NUCLEOTIDE SEQUENCE [LARGE SCALE GENOMIC DNA]</scope>
    <source>
        <strain>N315</strain>
    </source>
</reference>
<proteinExistence type="inferred from homology"/>
<comment type="function">
    <text evidence="1">Functions in the biosynthesis of branched-chain amino acids. Catalyzes the dehydration of (2R,3R)-2,3-dihydroxy-3-methylpentanoate (2,3-dihydroxy-3-methylvalerate) into 2-oxo-3-methylpentanoate (2-oxo-3-methylvalerate) and of (2R)-2,3-dihydroxy-3-methylbutanoate (2,3-dihydroxyisovalerate) into 2-oxo-3-methylbutanoate (2-oxoisovalerate), the penultimate precursor to L-isoleucine and L-valine, respectively.</text>
</comment>
<comment type="catalytic activity">
    <reaction evidence="1">
        <text>(2R)-2,3-dihydroxy-3-methylbutanoate = 3-methyl-2-oxobutanoate + H2O</text>
        <dbReference type="Rhea" id="RHEA:24809"/>
        <dbReference type="ChEBI" id="CHEBI:11851"/>
        <dbReference type="ChEBI" id="CHEBI:15377"/>
        <dbReference type="ChEBI" id="CHEBI:49072"/>
        <dbReference type="EC" id="4.2.1.9"/>
    </reaction>
    <physiologicalReaction direction="left-to-right" evidence="1">
        <dbReference type="Rhea" id="RHEA:24810"/>
    </physiologicalReaction>
</comment>
<comment type="catalytic activity">
    <reaction evidence="1">
        <text>(2R,3R)-2,3-dihydroxy-3-methylpentanoate = (S)-3-methyl-2-oxopentanoate + H2O</text>
        <dbReference type="Rhea" id="RHEA:27694"/>
        <dbReference type="ChEBI" id="CHEBI:15377"/>
        <dbReference type="ChEBI" id="CHEBI:35146"/>
        <dbReference type="ChEBI" id="CHEBI:49258"/>
        <dbReference type="EC" id="4.2.1.9"/>
    </reaction>
    <physiologicalReaction direction="left-to-right" evidence="1">
        <dbReference type="Rhea" id="RHEA:27695"/>
    </physiologicalReaction>
</comment>
<comment type="cofactor">
    <cofactor evidence="1">
        <name>[2Fe-2S] cluster</name>
        <dbReference type="ChEBI" id="CHEBI:190135"/>
    </cofactor>
    <text evidence="1">Binds 1 [2Fe-2S] cluster per subunit. This cluster acts as a Lewis acid cofactor.</text>
</comment>
<comment type="cofactor">
    <cofactor evidence="1">
        <name>Mg(2+)</name>
        <dbReference type="ChEBI" id="CHEBI:18420"/>
    </cofactor>
</comment>
<comment type="pathway">
    <text evidence="1">Amino-acid biosynthesis; L-isoleucine biosynthesis; L-isoleucine from 2-oxobutanoate: step 3/4.</text>
</comment>
<comment type="pathway">
    <text evidence="1">Amino-acid biosynthesis; L-valine biosynthesis; L-valine from pyruvate: step 3/4.</text>
</comment>
<comment type="subunit">
    <text evidence="1">Homodimer.</text>
</comment>
<comment type="similarity">
    <text evidence="1">Belongs to the IlvD/Edd family.</text>
</comment>
<organism>
    <name type="scientific">Staphylococcus aureus (strain N315)</name>
    <dbReference type="NCBI Taxonomy" id="158879"/>
    <lineage>
        <taxon>Bacteria</taxon>
        <taxon>Bacillati</taxon>
        <taxon>Bacillota</taxon>
        <taxon>Bacilli</taxon>
        <taxon>Bacillales</taxon>
        <taxon>Staphylococcaceae</taxon>
        <taxon>Staphylococcus</taxon>
    </lineage>
</organism>
<gene>
    <name evidence="1" type="primary">ilvD</name>
    <name type="ordered locus">SA1858</name>
</gene>
<name>ILVD_STAAN</name>
<evidence type="ECO:0000255" key="1">
    <source>
        <dbReference type="HAMAP-Rule" id="MF_00012"/>
    </source>
</evidence>